<organism>
    <name type="scientific">Bartonella henselae (strain ATCC 49882 / DSM 28221 / CCUG 30454 / Houston 1)</name>
    <name type="common">Rochalimaea henselae</name>
    <dbReference type="NCBI Taxonomy" id="283166"/>
    <lineage>
        <taxon>Bacteria</taxon>
        <taxon>Pseudomonadati</taxon>
        <taxon>Pseudomonadota</taxon>
        <taxon>Alphaproteobacteria</taxon>
        <taxon>Hyphomicrobiales</taxon>
        <taxon>Bartonellaceae</taxon>
        <taxon>Bartonella</taxon>
    </lineage>
</organism>
<name>RS17_BARHE</name>
<gene>
    <name evidence="1" type="primary">rpsQ</name>
    <name type="ordered locus">BH10420</name>
</gene>
<keyword id="KW-0687">Ribonucleoprotein</keyword>
<keyword id="KW-0689">Ribosomal protein</keyword>
<keyword id="KW-0694">RNA-binding</keyword>
<keyword id="KW-0699">rRNA-binding</keyword>
<dbReference type="EMBL" id="BX897699">
    <property type="protein sequence ID" value="CAF27833.1"/>
    <property type="molecule type" value="Genomic_DNA"/>
</dbReference>
<dbReference type="RefSeq" id="WP_011180905.1">
    <property type="nucleotide sequence ID" value="NZ_LRIJ02000001.1"/>
</dbReference>
<dbReference type="SMR" id="Q6G2X4"/>
<dbReference type="PaxDb" id="283166-BH10420"/>
<dbReference type="EnsemblBacteria" id="CAF27833">
    <property type="protein sequence ID" value="CAF27833"/>
    <property type="gene ID" value="BH10420"/>
</dbReference>
<dbReference type="GeneID" id="92985272"/>
<dbReference type="KEGG" id="bhe:BH10420"/>
<dbReference type="eggNOG" id="COG0186">
    <property type="taxonomic scope" value="Bacteria"/>
</dbReference>
<dbReference type="OrthoDB" id="9811714at2"/>
<dbReference type="Proteomes" id="UP000000421">
    <property type="component" value="Chromosome"/>
</dbReference>
<dbReference type="GO" id="GO:0022627">
    <property type="term" value="C:cytosolic small ribosomal subunit"/>
    <property type="evidence" value="ECO:0007669"/>
    <property type="project" value="TreeGrafter"/>
</dbReference>
<dbReference type="GO" id="GO:0019843">
    <property type="term" value="F:rRNA binding"/>
    <property type="evidence" value="ECO:0007669"/>
    <property type="project" value="UniProtKB-UniRule"/>
</dbReference>
<dbReference type="GO" id="GO:0003735">
    <property type="term" value="F:structural constituent of ribosome"/>
    <property type="evidence" value="ECO:0007669"/>
    <property type="project" value="InterPro"/>
</dbReference>
<dbReference type="GO" id="GO:0006412">
    <property type="term" value="P:translation"/>
    <property type="evidence" value="ECO:0007669"/>
    <property type="project" value="UniProtKB-UniRule"/>
</dbReference>
<dbReference type="CDD" id="cd00364">
    <property type="entry name" value="Ribosomal_uS17"/>
    <property type="match status" value="1"/>
</dbReference>
<dbReference type="Gene3D" id="2.40.50.140">
    <property type="entry name" value="Nucleic acid-binding proteins"/>
    <property type="match status" value="1"/>
</dbReference>
<dbReference type="HAMAP" id="MF_01345_B">
    <property type="entry name" value="Ribosomal_uS17_B"/>
    <property type="match status" value="1"/>
</dbReference>
<dbReference type="InterPro" id="IPR012340">
    <property type="entry name" value="NA-bd_OB-fold"/>
</dbReference>
<dbReference type="InterPro" id="IPR000266">
    <property type="entry name" value="Ribosomal_uS17"/>
</dbReference>
<dbReference type="InterPro" id="IPR019984">
    <property type="entry name" value="Ribosomal_uS17_bact/chlr"/>
</dbReference>
<dbReference type="InterPro" id="IPR019979">
    <property type="entry name" value="Ribosomal_uS17_CS"/>
</dbReference>
<dbReference type="NCBIfam" id="NF004123">
    <property type="entry name" value="PRK05610.1"/>
    <property type="match status" value="1"/>
</dbReference>
<dbReference type="NCBIfam" id="TIGR03635">
    <property type="entry name" value="uS17_bact"/>
    <property type="match status" value="1"/>
</dbReference>
<dbReference type="PANTHER" id="PTHR10744">
    <property type="entry name" value="40S RIBOSOMAL PROTEIN S11 FAMILY MEMBER"/>
    <property type="match status" value="1"/>
</dbReference>
<dbReference type="PANTHER" id="PTHR10744:SF1">
    <property type="entry name" value="SMALL RIBOSOMAL SUBUNIT PROTEIN US17M"/>
    <property type="match status" value="1"/>
</dbReference>
<dbReference type="Pfam" id="PF00366">
    <property type="entry name" value="Ribosomal_S17"/>
    <property type="match status" value="1"/>
</dbReference>
<dbReference type="PRINTS" id="PR00973">
    <property type="entry name" value="RIBOSOMALS17"/>
</dbReference>
<dbReference type="SUPFAM" id="SSF50249">
    <property type="entry name" value="Nucleic acid-binding proteins"/>
    <property type="match status" value="1"/>
</dbReference>
<dbReference type="PROSITE" id="PS00056">
    <property type="entry name" value="RIBOSOMAL_S17"/>
    <property type="match status" value="1"/>
</dbReference>
<sequence length="79" mass="9207">MPKRVLQGVVVSDKNDKTVVVKVERRYSHPLLKKTVRQSKKYKAHDESNQFKIGDQIFIQESKPISKDKRWIVVKDSVA</sequence>
<comment type="function">
    <text evidence="1">One of the primary rRNA binding proteins, it binds specifically to the 5'-end of 16S ribosomal RNA.</text>
</comment>
<comment type="subunit">
    <text evidence="1">Part of the 30S ribosomal subunit.</text>
</comment>
<comment type="similarity">
    <text evidence="1">Belongs to the universal ribosomal protein uS17 family.</text>
</comment>
<protein>
    <recommendedName>
        <fullName evidence="1">Small ribosomal subunit protein uS17</fullName>
    </recommendedName>
    <alternativeName>
        <fullName evidence="2">30S ribosomal protein S17</fullName>
    </alternativeName>
</protein>
<feature type="chain" id="PRO_0000233429" description="Small ribosomal subunit protein uS17">
    <location>
        <begin position="1"/>
        <end position="79"/>
    </location>
</feature>
<reference key="1">
    <citation type="journal article" date="2004" name="Proc. Natl. Acad. Sci. U.S.A.">
        <title>The louse-borne human pathogen Bartonella quintana is a genomic derivative of the zoonotic agent Bartonella henselae.</title>
        <authorList>
            <person name="Alsmark U.C.M."/>
            <person name="Frank A.C."/>
            <person name="Karlberg E.O."/>
            <person name="Legault B.-A."/>
            <person name="Ardell D.H."/>
            <person name="Canbaeck B."/>
            <person name="Eriksson A.-S."/>
            <person name="Naeslund A.K."/>
            <person name="Handley S.A."/>
            <person name="Huvet M."/>
            <person name="La Scola B."/>
            <person name="Holmberg M."/>
            <person name="Andersson S.G.E."/>
        </authorList>
    </citation>
    <scope>NUCLEOTIDE SEQUENCE [LARGE SCALE GENOMIC DNA]</scope>
    <source>
        <strain>ATCC 49882 / DSM 28221 / CCUG 30454 / Houston 1</strain>
    </source>
</reference>
<evidence type="ECO:0000255" key="1">
    <source>
        <dbReference type="HAMAP-Rule" id="MF_01345"/>
    </source>
</evidence>
<evidence type="ECO:0000305" key="2"/>
<proteinExistence type="inferred from homology"/>
<accession>Q6G2X4</accession>